<geneLocation type="plasmid">
    <name>pDL55</name>
</geneLocation>
<keyword id="KW-0002">3D-structure</keyword>
<keyword id="KW-0046">Antibiotic resistance</keyword>
<keyword id="KW-0067">ATP-binding</keyword>
<keyword id="KW-0547">Nucleotide-binding</keyword>
<keyword id="KW-0548">Nucleotidyltransferase</keyword>
<keyword id="KW-0614">Plasmid</keyword>
<keyword id="KW-0808">Transferase</keyword>
<reference key="1">
    <citation type="journal article" date="1991" name="Antimicrob. Agents Chemother.">
        <title>Cloning and nucleotide base sequence analysis of a spectinomycin adenyltransferase AAD(9) determinant from Enterococcus faecalis.</title>
        <authorList>
            <person name="Leblanc D.J."/>
            <person name="Lee L.N."/>
            <person name="Inamine J.M."/>
        </authorList>
    </citation>
    <scope>NUCLEOTIDE SEQUENCE [GENOMIC DNA]</scope>
    <scope>FUNCTION IN SPECTINOMYCIN RESISTANCE</scope>
    <scope>CATALYTIC ACTIVITY</scope>
    <source>
        <strain>LDR55</strain>
    </source>
</reference>
<evidence type="ECO:0000269" key="1">
    <source>
    </source>
</evidence>
<evidence type="ECO:0000303" key="2">
    <source>
    </source>
</evidence>
<evidence type="ECO:0007829" key="3">
    <source>
        <dbReference type="PDB" id="6SXJ"/>
    </source>
</evidence>
<evidence type="ECO:0007829" key="4">
    <source>
        <dbReference type="PDB" id="6XZ0"/>
    </source>
</evidence>
<accession>Q07448</accession>
<feature type="chain" id="PRO_0000068582" description="Spectinomycin 9-adenylyltransferase">
    <location>
        <begin position="1"/>
        <end position="255"/>
    </location>
</feature>
<feature type="helix" evidence="3">
    <location>
        <begin position="8"/>
        <end position="23"/>
    </location>
</feature>
<feature type="helix" evidence="3">
    <location>
        <begin position="24"/>
        <end position="26"/>
    </location>
</feature>
<feature type="strand" evidence="3">
    <location>
        <begin position="27"/>
        <end position="34"/>
    </location>
</feature>
<feature type="helix" evidence="3">
    <location>
        <begin position="35"/>
        <end position="38"/>
    </location>
</feature>
<feature type="strand" evidence="3">
    <location>
        <begin position="47"/>
        <end position="55"/>
    </location>
</feature>
<feature type="helix" evidence="3">
    <location>
        <begin position="59"/>
        <end position="69"/>
    </location>
</feature>
<feature type="helix" evidence="3">
    <location>
        <begin position="70"/>
        <end position="72"/>
    </location>
</feature>
<feature type="strand" evidence="3">
    <location>
        <begin position="85"/>
        <end position="92"/>
    </location>
</feature>
<feature type="helix" evidence="3">
    <location>
        <begin position="93"/>
        <end position="95"/>
    </location>
</feature>
<feature type="strand" evidence="3">
    <location>
        <begin position="106"/>
        <end position="108"/>
    </location>
</feature>
<feature type="helix" evidence="3">
    <location>
        <begin position="110"/>
        <end position="112"/>
    </location>
</feature>
<feature type="helix" evidence="3">
    <location>
        <begin position="113"/>
        <end position="117"/>
    </location>
</feature>
<feature type="strand" evidence="4">
    <location>
        <begin position="124"/>
        <end position="126"/>
    </location>
</feature>
<feature type="helix" evidence="3">
    <location>
        <begin position="130"/>
        <end position="139"/>
    </location>
</feature>
<feature type="strand" evidence="3">
    <location>
        <begin position="142"/>
        <end position="148"/>
    </location>
</feature>
<feature type="helix" evidence="3">
    <location>
        <begin position="150"/>
        <end position="153"/>
    </location>
</feature>
<feature type="helix" evidence="3">
    <location>
        <begin position="159"/>
        <end position="173"/>
    </location>
</feature>
<feature type="turn" evidence="4">
    <location>
        <begin position="174"/>
        <end position="176"/>
    </location>
</feature>
<feature type="helix" evidence="3">
    <location>
        <begin position="181"/>
        <end position="196"/>
    </location>
</feature>
<feature type="helix" evidence="3">
    <location>
        <begin position="203"/>
        <end position="212"/>
    </location>
</feature>
<feature type="helix" evidence="3">
    <location>
        <begin position="216"/>
        <end position="229"/>
    </location>
</feature>
<feature type="helix" evidence="3">
    <location>
        <begin position="236"/>
        <end position="238"/>
    </location>
</feature>
<feature type="helix" evidence="3">
    <location>
        <begin position="241"/>
        <end position="253"/>
    </location>
</feature>
<organism>
    <name type="scientific">Enterococcus faecalis</name>
    <name type="common">Streptococcus faecalis</name>
    <dbReference type="NCBI Taxonomy" id="1351"/>
    <lineage>
        <taxon>Bacteria</taxon>
        <taxon>Bacillati</taxon>
        <taxon>Bacillota</taxon>
        <taxon>Bacilli</taxon>
        <taxon>Lactobacillales</taxon>
        <taxon>Enterococcaceae</taxon>
        <taxon>Enterococcus</taxon>
    </lineage>
</organism>
<name>S9AD_ENTFL</name>
<sequence>MRRIYLNTYEQINKVKKILRKHLKNNLIGTYMFGSGVESGLKPNSDLDFLVVVSEPLTDQSKEILIQKIRPISKKIGDKSNLRYIELTIIIQQEMVPWNHPPKQEFIYGEWLQELYEQGYIPQKELNSDLTIMLYQAKRKNKRIYGNYDLEELLPDIPFSDVRRAIMDSSEELIDNYQDDETNSILTLCRMILTMDTGKIIPKDIAGNAVAESSPLEHRERILLAVRSYLGENIEWTNENVNLTINYLNNRLKKL</sequence>
<gene>
    <name evidence="2" type="primary">spc</name>
    <name evidence="2" type="synonym">aad9</name>
</gene>
<dbReference type="EMBL" id="M69221">
    <property type="protein sequence ID" value="AAA16527.1"/>
    <property type="molecule type" value="Unassigned_DNA"/>
</dbReference>
<dbReference type="PIR" id="A61153">
    <property type="entry name" value="A61153"/>
</dbReference>
<dbReference type="RefSeq" id="WP_063840673.1">
    <property type="nucleotide sequence ID" value="NG_047398.1"/>
</dbReference>
<dbReference type="PDB" id="6SXJ">
    <property type="method" value="X-ray"/>
    <property type="resolution" value="2.10 A"/>
    <property type="chains" value="A=1-255"/>
</dbReference>
<dbReference type="PDB" id="6XXQ">
    <property type="method" value="X-ray"/>
    <property type="resolution" value="3.00 A"/>
    <property type="chains" value="A/B=1-255"/>
</dbReference>
<dbReference type="PDB" id="6XZ0">
    <property type="method" value="X-ray"/>
    <property type="resolution" value="2.80 A"/>
    <property type="chains" value="A=1-255"/>
</dbReference>
<dbReference type="PDBsum" id="6SXJ"/>
<dbReference type="PDBsum" id="6XXQ"/>
<dbReference type="PDBsum" id="6XZ0"/>
<dbReference type="SMR" id="Q07448"/>
<dbReference type="CARD" id="ARO:3007401">
    <property type="molecule name" value="ANT(9)-Ib"/>
    <property type="mechanism identifier" value="ARO:0001004"/>
    <property type="mechanism name" value="antibiotic inactivation"/>
</dbReference>
<dbReference type="KEGG" id="ag:AAA16527"/>
<dbReference type="GO" id="GO:0005524">
    <property type="term" value="F:ATP binding"/>
    <property type="evidence" value="ECO:0007669"/>
    <property type="project" value="UniProtKB-KW"/>
</dbReference>
<dbReference type="GO" id="GO:0016779">
    <property type="term" value="F:nucleotidyltransferase activity"/>
    <property type="evidence" value="ECO:0007669"/>
    <property type="project" value="UniProtKB-KW"/>
</dbReference>
<dbReference type="GO" id="GO:0046677">
    <property type="term" value="P:response to antibiotic"/>
    <property type="evidence" value="ECO:0000314"/>
    <property type="project" value="UniProtKB"/>
</dbReference>
<dbReference type="CDD" id="cd05403">
    <property type="entry name" value="NT_KNTase_like"/>
    <property type="match status" value="1"/>
</dbReference>
<dbReference type="Gene3D" id="3.30.460.10">
    <property type="entry name" value="Beta Polymerase, domain 2"/>
    <property type="match status" value="1"/>
</dbReference>
<dbReference type="InterPro" id="IPR025184">
    <property type="entry name" value="AadA_C"/>
</dbReference>
<dbReference type="InterPro" id="IPR043519">
    <property type="entry name" value="NT_sf"/>
</dbReference>
<dbReference type="InterPro" id="IPR002934">
    <property type="entry name" value="Polymerase_NTP_transf_dom"/>
</dbReference>
<dbReference type="NCBIfam" id="NF012212">
    <property type="entry name" value="ANT_9"/>
    <property type="match status" value="1"/>
</dbReference>
<dbReference type="Pfam" id="PF13427">
    <property type="entry name" value="AadA_C"/>
    <property type="match status" value="1"/>
</dbReference>
<dbReference type="Pfam" id="PF01909">
    <property type="entry name" value="NTP_transf_2"/>
    <property type="match status" value="1"/>
</dbReference>
<dbReference type="SUPFAM" id="SSF81301">
    <property type="entry name" value="Nucleotidyltransferase"/>
    <property type="match status" value="1"/>
</dbReference>
<protein>
    <recommendedName>
        <fullName evidence="2">Spectinomycin 9-adenylyltransferase</fullName>
    </recommendedName>
    <alternativeName>
        <fullName evidence="2">AAD(9)</fullName>
    </alternativeName>
</protein>
<proteinExistence type="evidence at protein level"/>
<comment type="function">
    <text evidence="1">Mediates bacterial resistance to the antibiotic spectinomycin but not streptomycin.</text>
</comment>
<comment type="catalytic activity">
    <reaction evidence="1">
        <text>spectinomycin + ATP = 9-O-adenylylspectinomycin + diphosphate</text>
        <dbReference type="Rhea" id="RHEA:63228"/>
        <dbReference type="ChEBI" id="CHEBI:30616"/>
        <dbReference type="ChEBI" id="CHEBI:33019"/>
        <dbReference type="ChEBI" id="CHEBI:146260"/>
        <dbReference type="ChEBI" id="CHEBI:146261"/>
    </reaction>
</comment>